<reference key="1">
    <citation type="journal article" date="1992" name="Gene">
        <title>The Aspergillus niger niaD gene encoding nitrate reductase: upstream nucleotide and amino acid sequence comparisons.</title>
        <authorList>
            <person name="Unkles S.E."/>
            <person name="Campbell E.I."/>
            <person name="Punt P.J."/>
            <person name="Hawker K.L."/>
            <person name="Contreras R."/>
            <person name="Hawkins A.R."/>
            <person name="van den Hondel C.A.M.J.J."/>
            <person name="Kinghorn J.R."/>
        </authorList>
    </citation>
    <scope>NUCLEOTIDE SEQUENCE [GENOMIC DNA]</scope>
</reference>
<gene>
    <name type="primary">niaD</name>
</gene>
<evidence type="ECO:0000250" key="1"/>
<evidence type="ECO:0000250" key="2">
    <source>
        <dbReference type="UniProtKB" id="A0A286R227"/>
    </source>
</evidence>
<evidence type="ECO:0000250" key="3">
    <source>
        <dbReference type="UniProtKB" id="P17571"/>
    </source>
</evidence>
<evidence type="ECO:0000250" key="4">
    <source>
        <dbReference type="UniProtKB" id="P49050"/>
    </source>
</evidence>
<evidence type="ECO:0000255" key="5"/>
<evidence type="ECO:0000255" key="6">
    <source>
        <dbReference type="PROSITE-ProRule" id="PRU00279"/>
    </source>
</evidence>
<evidence type="ECO:0000255" key="7">
    <source>
        <dbReference type="PROSITE-ProRule" id="PRU00716"/>
    </source>
</evidence>
<evidence type="ECO:0000256" key="8">
    <source>
        <dbReference type="SAM" id="MobiDB-lite"/>
    </source>
</evidence>
<evidence type="ECO:0000305" key="9"/>
<feature type="chain" id="PRO_0000166040" description="Nitrate reductase [NADPH]">
    <location>
        <begin position="1"/>
        <end position="867"/>
    </location>
</feature>
<feature type="domain" description="Cytochrome b5 heme-binding" evidence="6">
    <location>
        <begin position="514"/>
        <end position="589"/>
    </location>
</feature>
<feature type="domain" description="FAD-binding FR-type" evidence="7">
    <location>
        <begin position="615"/>
        <end position="726"/>
    </location>
</feature>
<feature type="region of interest" description="Disordered" evidence="8">
    <location>
        <begin position="38"/>
        <end position="58"/>
    </location>
</feature>
<feature type="binding site" evidence="4">
    <location>
        <position position="152"/>
    </location>
    <ligand>
        <name>Mo-molybdopterin</name>
        <dbReference type="ChEBI" id="CHEBI:71302"/>
    </ligand>
    <ligandPart>
        <name>Mo</name>
        <dbReference type="ChEBI" id="CHEBI:28685"/>
    </ligandPart>
</feature>
<feature type="binding site" description="axial binding residue" evidence="6">
    <location>
        <position position="549"/>
    </location>
    <ligand>
        <name>heme</name>
        <dbReference type="ChEBI" id="CHEBI:30413"/>
    </ligand>
    <ligandPart>
        <name>Fe</name>
        <dbReference type="ChEBI" id="CHEBI:18248"/>
    </ligandPart>
</feature>
<feature type="binding site" description="axial binding residue" evidence="6">
    <location>
        <position position="572"/>
    </location>
    <ligand>
        <name>heme</name>
        <dbReference type="ChEBI" id="CHEBI:30413"/>
    </ligand>
    <ligandPart>
        <name>Fe</name>
        <dbReference type="ChEBI" id="CHEBI:18248"/>
    </ligandPart>
</feature>
<feature type="binding site" evidence="2">
    <location>
        <begin position="669"/>
        <end position="672"/>
    </location>
    <ligand>
        <name>FAD</name>
        <dbReference type="ChEBI" id="CHEBI:57692"/>
    </ligand>
</feature>
<feature type="binding site" evidence="2">
    <location>
        <begin position="686"/>
        <end position="690"/>
    </location>
    <ligand>
        <name>FAD</name>
        <dbReference type="ChEBI" id="CHEBI:57692"/>
    </ligand>
</feature>
<feature type="binding site" evidence="3">
    <location>
        <position position="691"/>
    </location>
    <ligand>
        <name>FAD</name>
        <dbReference type="ChEBI" id="CHEBI:57692"/>
    </ligand>
</feature>
<feature type="binding site" evidence="2">
    <location>
        <begin position="700"/>
        <end position="702"/>
    </location>
    <ligand>
        <name>FAD</name>
        <dbReference type="ChEBI" id="CHEBI:57692"/>
    </ligand>
</feature>
<feature type="binding site" evidence="2">
    <location>
        <position position="753"/>
    </location>
    <ligand>
        <name>FAD</name>
        <dbReference type="ChEBI" id="CHEBI:57692"/>
    </ligand>
</feature>
<feature type="binding site" evidence="1">
    <location>
        <begin position="837"/>
        <end position="846"/>
    </location>
    <ligand>
        <name>NADP(+)</name>
        <dbReference type="ChEBI" id="CHEBI:58349"/>
    </ligand>
</feature>
<feature type="disulfide bond" description="Interchain" evidence="5">
    <location>
        <position position="399"/>
    </location>
</feature>
<protein>
    <recommendedName>
        <fullName>Nitrate reductase [NADPH]</fullName>
        <shortName>NR</shortName>
        <ecNumber>1.7.1.3</ecNumber>
    </recommendedName>
</protein>
<accession>P36858</accession>
<sequence length="867" mass="97189">MATVTEVLTEPFTAQGVTLKSGPIKVHQEELPAVELSDIPLPPPSKEPTEVLSIDKPTPDYHVPRDPRLIRLTGVHPFNVEPPLTALYDEGFLTSPELFYVRNHGPVPLVKDEDIPNWEISIEGLVEKPLVLNFRDILQQYDQITAPITLVCAGNRRKEQNVVRKTKGFSWGSAGLSTALWTGPMMADILRSAKPLRKAKYVCMEGADKLPNGYYGTSIKLNWAMDPNRGIMLAHKMNGEDLRPDHGRPLRAVVPGQIGGRSVKWLKKLILTDAPSDNWYHIYDNRVLPTMVSPEMSSSDPNWWRDDRYAIYDLNVNSSVVYPEHKEVLDLASAGPSYNVKGYAYAGGGRRITRVEISLDKGKSWRLANISYAEDKYRDFEGDLFGGRVHMSWRETCFCWCFWSLDIAIPELENTDAILVRAMDEALALQPRDMYWSVLGMMNNPWFRVTITKENGTLRFEHPTDPTGPGGWMERVKKAGGDLVNGYWGERQAGEEPTEPEPEKEINMKKEGVNRIIDLQEFKKNSSDEKPWFIVNGEVYDGTAFLEGHPGGAQSIISSAGIDVSEEFLAIHTQTAKAMMPDYHIGTMDKASLEALKNDNAPQSDEPRATFLQSKSWTKATLVKRTDVSWDTRIFTFQLQHDKQTLGLPIGQHLMIKVADPTSKEAIIRSYTPISDTNQEGTMDLLVKIYFDTPTVKGGKMTMALEKLALGSEIDCKGPTGRFEYLGNGKILVSGKERHVSSFKMICGGTGITPIFQVLRAVMQDKQDPTSCVVLDGNRQEEDILCRADLDAYEALDSKKCKVVHTLTKAPDSWTGRRGRISEDLLKEHAIPDGKSMVLICGPEAMEKSARKILLEQGWAESDLHFF</sequence>
<name>NIA_ASPNG</name>
<keyword id="KW-1015">Disulfide bond</keyword>
<keyword id="KW-0274">FAD</keyword>
<keyword id="KW-0285">Flavoprotein</keyword>
<keyword id="KW-0349">Heme</keyword>
<keyword id="KW-0408">Iron</keyword>
<keyword id="KW-0479">Metal-binding</keyword>
<keyword id="KW-0500">Molybdenum</keyword>
<keyword id="KW-0521">NADP</keyword>
<keyword id="KW-0534">Nitrate assimilation</keyword>
<keyword id="KW-0560">Oxidoreductase</keyword>
<comment type="function">
    <text>Nitrate reductase is a key enzyme involved in the first step of nitrate assimilation in plants, fungi and bacteria.</text>
</comment>
<comment type="catalytic activity">
    <reaction>
        <text>nitrite + NADP(+) + H2O = nitrate + NADPH + H(+)</text>
        <dbReference type="Rhea" id="RHEA:19061"/>
        <dbReference type="ChEBI" id="CHEBI:15377"/>
        <dbReference type="ChEBI" id="CHEBI:15378"/>
        <dbReference type="ChEBI" id="CHEBI:16301"/>
        <dbReference type="ChEBI" id="CHEBI:17632"/>
        <dbReference type="ChEBI" id="CHEBI:57783"/>
        <dbReference type="ChEBI" id="CHEBI:58349"/>
        <dbReference type="EC" id="1.7.1.3"/>
    </reaction>
</comment>
<comment type="cofactor">
    <cofactor evidence="1">
        <name>FAD</name>
        <dbReference type="ChEBI" id="CHEBI:57692"/>
    </cofactor>
    <text evidence="1">Binds 1 FAD.</text>
</comment>
<comment type="cofactor">
    <cofactor evidence="1">
        <name>heme</name>
        <dbReference type="ChEBI" id="CHEBI:30413"/>
    </cofactor>
    <text evidence="1">Binds 1 heme group. The heme group is called cytochrome b-557.</text>
</comment>
<comment type="cofactor">
    <cofactor evidence="1">
        <name>Mo-molybdopterin</name>
        <dbReference type="ChEBI" id="CHEBI:71302"/>
    </cofactor>
    <text evidence="1">Binds 1 Mo-molybdopterin (Mo-MPT) cofactor per subunit.</text>
</comment>
<comment type="subunit">
    <text evidence="1">Homodimer.</text>
</comment>
<comment type="similarity">
    <text evidence="9">Belongs to the nitrate reductase family.</text>
</comment>
<proteinExistence type="inferred from homology"/>
<organism>
    <name type="scientific">Aspergillus niger</name>
    <dbReference type="NCBI Taxonomy" id="5061"/>
    <lineage>
        <taxon>Eukaryota</taxon>
        <taxon>Fungi</taxon>
        <taxon>Dikarya</taxon>
        <taxon>Ascomycota</taxon>
        <taxon>Pezizomycotina</taxon>
        <taxon>Eurotiomycetes</taxon>
        <taxon>Eurotiomycetidae</taxon>
        <taxon>Eurotiales</taxon>
        <taxon>Aspergillaceae</taxon>
        <taxon>Aspergillus</taxon>
        <taxon>Aspergillus subgen. Circumdati</taxon>
    </lineage>
</organism>
<dbReference type="EC" id="1.7.1.3"/>
<dbReference type="EMBL" id="M77022">
    <property type="status" value="NOT_ANNOTATED_CDS"/>
    <property type="molecule type" value="Genomic_DNA"/>
</dbReference>
<dbReference type="PIR" id="JQ1525">
    <property type="entry name" value="JQ1525"/>
</dbReference>
<dbReference type="SMR" id="P36858"/>
<dbReference type="PaxDb" id="5061-CADANGAP00006756"/>
<dbReference type="VEuPathDB" id="FungiDB:An08g05610"/>
<dbReference type="VEuPathDB" id="FungiDB:ASPNIDRAFT2_1129386"/>
<dbReference type="VEuPathDB" id="FungiDB:ATCC64974_101980"/>
<dbReference type="VEuPathDB" id="FungiDB:M747DRAFT_296682"/>
<dbReference type="eggNOG" id="KOG0534">
    <property type="taxonomic scope" value="Eukaryota"/>
</dbReference>
<dbReference type="eggNOG" id="KOG0535">
    <property type="taxonomic scope" value="Eukaryota"/>
</dbReference>
<dbReference type="eggNOG" id="KOG0537">
    <property type="taxonomic scope" value="Eukaryota"/>
</dbReference>
<dbReference type="GO" id="GO:0071949">
    <property type="term" value="F:FAD binding"/>
    <property type="evidence" value="ECO:0000250"/>
    <property type="project" value="UniProtKB"/>
</dbReference>
<dbReference type="GO" id="GO:0020037">
    <property type="term" value="F:heme binding"/>
    <property type="evidence" value="ECO:0007669"/>
    <property type="project" value="InterPro"/>
</dbReference>
<dbReference type="GO" id="GO:0030151">
    <property type="term" value="F:molybdenum ion binding"/>
    <property type="evidence" value="ECO:0000250"/>
    <property type="project" value="UniProtKB"/>
</dbReference>
<dbReference type="GO" id="GO:0043546">
    <property type="term" value="F:molybdopterin cofactor binding"/>
    <property type="evidence" value="ECO:0007669"/>
    <property type="project" value="InterPro"/>
</dbReference>
<dbReference type="GO" id="GO:0050464">
    <property type="term" value="F:nitrate reductase (NADPH) activity"/>
    <property type="evidence" value="ECO:0007669"/>
    <property type="project" value="UniProtKB-EC"/>
</dbReference>
<dbReference type="GO" id="GO:0008482">
    <property type="term" value="F:sulfite oxidase activity"/>
    <property type="evidence" value="ECO:0007669"/>
    <property type="project" value="TreeGrafter"/>
</dbReference>
<dbReference type="GO" id="GO:0042128">
    <property type="term" value="P:nitrate assimilation"/>
    <property type="evidence" value="ECO:0007669"/>
    <property type="project" value="UniProtKB-KW"/>
</dbReference>
<dbReference type="GO" id="GO:0006809">
    <property type="term" value="P:nitric oxide biosynthetic process"/>
    <property type="evidence" value="ECO:0007669"/>
    <property type="project" value="InterPro"/>
</dbReference>
<dbReference type="GO" id="GO:0006790">
    <property type="term" value="P:sulfur compound metabolic process"/>
    <property type="evidence" value="ECO:0007669"/>
    <property type="project" value="TreeGrafter"/>
</dbReference>
<dbReference type="CDD" id="cd06183">
    <property type="entry name" value="cyt_b5_reduct_like"/>
    <property type="match status" value="1"/>
</dbReference>
<dbReference type="FunFam" id="2.40.30.10:FF:000021">
    <property type="entry name" value="NADH-cytochrome b5 reductase"/>
    <property type="match status" value="1"/>
</dbReference>
<dbReference type="FunFam" id="2.60.40.650:FF:000001">
    <property type="entry name" value="Nitrate reductase"/>
    <property type="match status" value="1"/>
</dbReference>
<dbReference type="FunFam" id="3.10.120.10:FF:000016">
    <property type="entry name" value="Nitrate reductase"/>
    <property type="match status" value="1"/>
</dbReference>
<dbReference type="FunFam" id="3.40.50.80:FF:000049">
    <property type="entry name" value="Nitrate reductase"/>
    <property type="match status" value="1"/>
</dbReference>
<dbReference type="FunFam" id="3.90.420.10:FF:000005">
    <property type="entry name" value="Nitrate reductase"/>
    <property type="match status" value="1"/>
</dbReference>
<dbReference type="Gene3D" id="2.60.40.650">
    <property type="match status" value="1"/>
</dbReference>
<dbReference type="Gene3D" id="3.10.120.10">
    <property type="entry name" value="Cytochrome b5-like heme/steroid binding domain"/>
    <property type="match status" value="1"/>
</dbReference>
<dbReference type="Gene3D" id="3.40.50.80">
    <property type="entry name" value="Nucleotide-binding domain of ferredoxin-NADP reductase (FNR) module"/>
    <property type="match status" value="1"/>
</dbReference>
<dbReference type="Gene3D" id="3.90.420.10">
    <property type="entry name" value="Oxidoreductase, molybdopterin-binding domain"/>
    <property type="match status" value="1"/>
</dbReference>
<dbReference type="Gene3D" id="2.40.30.10">
    <property type="entry name" value="Translation factors"/>
    <property type="match status" value="1"/>
</dbReference>
<dbReference type="InterPro" id="IPR008333">
    <property type="entry name" value="Cbr1-like_FAD-bd_dom"/>
</dbReference>
<dbReference type="InterPro" id="IPR001199">
    <property type="entry name" value="Cyt_B5-like_heme/steroid-bd"/>
</dbReference>
<dbReference type="InterPro" id="IPR036400">
    <property type="entry name" value="Cyt_B5-like_heme/steroid_sf"/>
</dbReference>
<dbReference type="InterPro" id="IPR018506">
    <property type="entry name" value="Cyt_B5_heme-BS"/>
</dbReference>
<dbReference type="InterPro" id="IPR017927">
    <property type="entry name" value="FAD-bd_FR_type"/>
</dbReference>
<dbReference type="InterPro" id="IPR001709">
    <property type="entry name" value="Flavoprot_Pyr_Nucl_cyt_Rdtase"/>
</dbReference>
<dbReference type="InterPro" id="IPR039261">
    <property type="entry name" value="FNR_nucleotide-bd"/>
</dbReference>
<dbReference type="InterPro" id="IPR014756">
    <property type="entry name" value="Ig_E-set"/>
</dbReference>
<dbReference type="InterPro" id="IPR005066">
    <property type="entry name" value="MoCF_OxRdtse_dimer"/>
</dbReference>
<dbReference type="InterPro" id="IPR008335">
    <property type="entry name" value="Mopterin_OxRdtase_euk"/>
</dbReference>
<dbReference type="InterPro" id="IPR012137">
    <property type="entry name" value="Nitr_rd_NADH"/>
</dbReference>
<dbReference type="InterPro" id="IPR001433">
    <property type="entry name" value="OxRdtase_FAD/NAD-bd"/>
</dbReference>
<dbReference type="InterPro" id="IPR000572">
    <property type="entry name" value="OxRdtase_Mopterin-bd_dom"/>
</dbReference>
<dbReference type="InterPro" id="IPR036374">
    <property type="entry name" value="OxRdtase_Mopterin-bd_sf"/>
</dbReference>
<dbReference type="InterPro" id="IPR022407">
    <property type="entry name" value="OxRdtase_Mopterin_BS"/>
</dbReference>
<dbReference type="InterPro" id="IPR017938">
    <property type="entry name" value="Riboflavin_synthase-like_b-brl"/>
</dbReference>
<dbReference type="PANTHER" id="PTHR19372:SF7">
    <property type="entry name" value="SULFITE OXIDASE, MITOCHONDRIAL"/>
    <property type="match status" value="1"/>
</dbReference>
<dbReference type="PANTHER" id="PTHR19372">
    <property type="entry name" value="SULFITE REDUCTASE"/>
    <property type="match status" value="1"/>
</dbReference>
<dbReference type="Pfam" id="PF00173">
    <property type="entry name" value="Cyt-b5"/>
    <property type="match status" value="1"/>
</dbReference>
<dbReference type="Pfam" id="PF00970">
    <property type="entry name" value="FAD_binding_6"/>
    <property type="match status" value="1"/>
</dbReference>
<dbReference type="Pfam" id="PF03404">
    <property type="entry name" value="Mo-co_dimer"/>
    <property type="match status" value="1"/>
</dbReference>
<dbReference type="Pfam" id="PF00175">
    <property type="entry name" value="NAD_binding_1"/>
    <property type="match status" value="1"/>
</dbReference>
<dbReference type="Pfam" id="PF00174">
    <property type="entry name" value="Oxidored_molyb"/>
    <property type="match status" value="1"/>
</dbReference>
<dbReference type="PIRSF" id="PIRSF000233">
    <property type="entry name" value="Nitr_rd_NADH"/>
    <property type="match status" value="1"/>
</dbReference>
<dbReference type="PRINTS" id="PR00406">
    <property type="entry name" value="CYTB5RDTASE"/>
</dbReference>
<dbReference type="PRINTS" id="PR00363">
    <property type="entry name" value="CYTOCHROMEB5"/>
</dbReference>
<dbReference type="PRINTS" id="PR00407">
    <property type="entry name" value="EUMOPTERIN"/>
</dbReference>
<dbReference type="PRINTS" id="PR00371">
    <property type="entry name" value="FPNCR"/>
</dbReference>
<dbReference type="SMART" id="SM01117">
    <property type="entry name" value="Cyt-b5"/>
    <property type="match status" value="1"/>
</dbReference>
<dbReference type="SUPFAM" id="SSF55856">
    <property type="entry name" value="Cytochrome b5-like heme/steroid binding domain"/>
    <property type="match status" value="1"/>
</dbReference>
<dbReference type="SUPFAM" id="SSF81296">
    <property type="entry name" value="E set domains"/>
    <property type="match status" value="1"/>
</dbReference>
<dbReference type="SUPFAM" id="SSF52343">
    <property type="entry name" value="Ferredoxin reductase-like, C-terminal NADP-linked domain"/>
    <property type="match status" value="1"/>
</dbReference>
<dbReference type="SUPFAM" id="SSF56524">
    <property type="entry name" value="Oxidoreductase molybdopterin-binding domain"/>
    <property type="match status" value="1"/>
</dbReference>
<dbReference type="SUPFAM" id="SSF63380">
    <property type="entry name" value="Riboflavin synthase domain-like"/>
    <property type="match status" value="1"/>
</dbReference>
<dbReference type="PROSITE" id="PS00191">
    <property type="entry name" value="CYTOCHROME_B5_1"/>
    <property type="match status" value="1"/>
</dbReference>
<dbReference type="PROSITE" id="PS50255">
    <property type="entry name" value="CYTOCHROME_B5_2"/>
    <property type="match status" value="1"/>
</dbReference>
<dbReference type="PROSITE" id="PS51384">
    <property type="entry name" value="FAD_FR"/>
    <property type="match status" value="1"/>
</dbReference>
<dbReference type="PROSITE" id="PS00559">
    <property type="entry name" value="MOLYBDOPTERIN_EUK"/>
    <property type="match status" value="1"/>
</dbReference>